<accession>Q5ZI16</accession>
<keyword id="KW-0378">Hydrolase</keyword>
<keyword id="KW-0479">Metal-binding</keyword>
<keyword id="KW-1185">Reference proteome</keyword>
<keyword id="KW-0819">tRNA processing</keyword>
<keyword id="KW-0862">Zinc</keyword>
<gene>
    <name type="primary">ADAT1</name>
    <name type="ORF">RCJMB04_31g18</name>
</gene>
<feature type="chain" id="PRO_0000287649" description="tRNA-specific adenosine deaminase 1">
    <location>
        <begin position="1"/>
        <end position="503"/>
    </location>
</feature>
<feature type="domain" description="A to I editase" evidence="2">
    <location>
        <begin position="63"/>
        <end position="502"/>
    </location>
</feature>
<feature type="active site" description="Proton donor" evidence="2">
    <location>
        <position position="89"/>
    </location>
</feature>
<feature type="binding site" evidence="2">
    <location>
        <position position="87"/>
    </location>
    <ligand>
        <name>Zn(2+)</name>
        <dbReference type="ChEBI" id="CHEBI:29105"/>
    </ligand>
</feature>
<feature type="binding site" evidence="1">
    <location>
        <position position="94"/>
    </location>
    <ligand>
        <name>1D-myo-inositol hexakisphosphate</name>
        <dbReference type="ChEBI" id="CHEBI:58130"/>
    </ligand>
</feature>
<feature type="binding site" evidence="2">
    <location>
        <position position="142"/>
    </location>
    <ligand>
        <name>Zn(2+)</name>
        <dbReference type="ChEBI" id="CHEBI:29105"/>
    </ligand>
</feature>
<feature type="binding site" evidence="2">
    <location>
        <position position="300"/>
    </location>
    <ligand>
        <name>Zn(2+)</name>
        <dbReference type="ChEBI" id="CHEBI:29105"/>
    </ligand>
</feature>
<feature type="binding site" evidence="1">
    <location>
        <position position="303"/>
    </location>
    <ligand>
        <name>1D-myo-inositol hexakisphosphate</name>
        <dbReference type="ChEBI" id="CHEBI:58130"/>
    </ligand>
</feature>
<feature type="binding site" evidence="1">
    <location>
        <position position="306"/>
    </location>
    <ligand>
        <name>1D-myo-inositol hexakisphosphate</name>
        <dbReference type="ChEBI" id="CHEBI:58130"/>
    </ligand>
</feature>
<feature type="binding site" evidence="1">
    <location>
        <position position="436"/>
    </location>
    <ligand>
        <name>1D-myo-inositol hexakisphosphate</name>
        <dbReference type="ChEBI" id="CHEBI:58130"/>
    </ligand>
</feature>
<feature type="binding site" evidence="1">
    <location>
        <position position="471"/>
    </location>
    <ligand>
        <name>1D-myo-inositol hexakisphosphate</name>
        <dbReference type="ChEBI" id="CHEBI:58130"/>
    </ligand>
</feature>
<evidence type="ECO:0000250" key="1"/>
<evidence type="ECO:0000255" key="2">
    <source>
        <dbReference type="PROSITE-ProRule" id="PRU00240"/>
    </source>
</evidence>
<evidence type="ECO:0000305" key="3"/>
<dbReference type="EC" id="3.5.4.34"/>
<dbReference type="EMBL" id="AJ720968">
    <property type="protein sequence ID" value="CAG32627.1"/>
    <property type="molecule type" value="mRNA"/>
</dbReference>
<dbReference type="RefSeq" id="NP_001012797.1">
    <property type="nucleotide sequence ID" value="NM_001012779.1"/>
</dbReference>
<dbReference type="SMR" id="Q5ZI16"/>
<dbReference type="FunCoup" id="Q5ZI16">
    <property type="interactions" value="1312"/>
</dbReference>
<dbReference type="STRING" id="9031.ENSGALP00000001334"/>
<dbReference type="PaxDb" id="9031-ENSGALP00000001334"/>
<dbReference type="GeneID" id="415886"/>
<dbReference type="KEGG" id="gga:415886"/>
<dbReference type="CTD" id="23536"/>
<dbReference type="VEuPathDB" id="HostDB:geneid_415886"/>
<dbReference type="eggNOG" id="KOG2777">
    <property type="taxonomic scope" value="Eukaryota"/>
</dbReference>
<dbReference type="InParanoid" id="Q5ZI16"/>
<dbReference type="OrthoDB" id="10268011at2759"/>
<dbReference type="PhylomeDB" id="Q5ZI16"/>
<dbReference type="PRO" id="PR:Q5ZI16"/>
<dbReference type="Proteomes" id="UP000000539">
    <property type="component" value="Unassembled WGS sequence"/>
</dbReference>
<dbReference type="GO" id="GO:0046872">
    <property type="term" value="F:metal ion binding"/>
    <property type="evidence" value="ECO:0007669"/>
    <property type="project" value="UniProtKB-KW"/>
</dbReference>
<dbReference type="GO" id="GO:0003723">
    <property type="term" value="F:RNA binding"/>
    <property type="evidence" value="ECO:0000250"/>
    <property type="project" value="UniProtKB"/>
</dbReference>
<dbReference type="GO" id="GO:0008251">
    <property type="term" value="F:tRNA-specific adenosine deaminase activity"/>
    <property type="evidence" value="ECO:0000250"/>
    <property type="project" value="UniProtKB"/>
</dbReference>
<dbReference type="GO" id="GO:0043829">
    <property type="term" value="F:tRNA-specific adenosine-37 deaminase activity"/>
    <property type="evidence" value="ECO:0007669"/>
    <property type="project" value="UniProtKB-EC"/>
</dbReference>
<dbReference type="GO" id="GO:0008033">
    <property type="term" value="P:tRNA processing"/>
    <property type="evidence" value="ECO:0000250"/>
    <property type="project" value="UniProtKB"/>
</dbReference>
<dbReference type="InterPro" id="IPR002466">
    <property type="entry name" value="A_deamin"/>
</dbReference>
<dbReference type="PANTHER" id="PTHR46516">
    <property type="entry name" value="TRNA-SPECIFIC ADENOSINE DEAMINASE 1"/>
    <property type="match status" value="1"/>
</dbReference>
<dbReference type="PANTHER" id="PTHR46516:SF1">
    <property type="entry name" value="TRNA-SPECIFIC ADENOSINE DEAMINASE 1"/>
    <property type="match status" value="1"/>
</dbReference>
<dbReference type="Pfam" id="PF02137">
    <property type="entry name" value="A_deamin"/>
    <property type="match status" value="1"/>
</dbReference>
<dbReference type="SMART" id="SM00552">
    <property type="entry name" value="ADEAMc"/>
    <property type="match status" value="1"/>
</dbReference>
<dbReference type="PROSITE" id="PS50141">
    <property type="entry name" value="A_DEAMIN_EDITASE"/>
    <property type="match status" value="1"/>
</dbReference>
<name>ADAT1_CHICK</name>
<proteinExistence type="evidence at transcript level"/>
<organism>
    <name type="scientific">Gallus gallus</name>
    <name type="common">Chicken</name>
    <dbReference type="NCBI Taxonomy" id="9031"/>
    <lineage>
        <taxon>Eukaryota</taxon>
        <taxon>Metazoa</taxon>
        <taxon>Chordata</taxon>
        <taxon>Craniata</taxon>
        <taxon>Vertebrata</taxon>
        <taxon>Euteleostomi</taxon>
        <taxon>Archelosauria</taxon>
        <taxon>Archosauria</taxon>
        <taxon>Dinosauria</taxon>
        <taxon>Saurischia</taxon>
        <taxon>Theropoda</taxon>
        <taxon>Coelurosauria</taxon>
        <taxon>Aves</taxon>
        <taxon>Neognathae</taxon>
        <taxon>Galloanserae</taxon>
        <taxon>Galliformes</taxon>
        <taxon>Phasianidae</taxon>
        <taxon>Phasianinae</taxon>
        <taxon>Gallus</taxon>
    </lineage>
</organism>
<protein>
    <recommendedName>
        <fullName>tRNA-specific adenosine deaminase 1</fullName>
        <ecNumber>3.5.4.34</ecNumber>
    </recommendedName>
    <alternativeName>
        <fullName>tRNA-specific adenosine-37 deaminase</fullName>
    </alternativeName>
</protein>
<comment type="function">
    <text evidence="1">Specifically deaminates adenosine-37 to inosine in tRNA-Ala.</text>
</comment>
<comment type="catalytic activity">
    <reaction>
        <text>adenosine(37) in tRNA(Ala) + H2O + H(+) = inosine(37) in tRNA(Ala) + NH4(+)</text>
        <dbReference type="Rhea" id="RHEA:50968"/>
        <dbReference type="Rhea" id="RHEA-COMP:12855"/>
        <dbReference type="Rhea" id="RHEA-COMP:12856"/>
        <dbReference type="ChEBI" id="CHEBI:15377"/>
        <dbReference type="ChEBI" id="CHEBI:15378"/>
        <dbReference type="ChEBI" id="CHEBI:28938"/>
        <dbReference type="ChEBI" id="CHEBI:74411"/>
        <dbReference type="ChEBI" id="CHEBI:82852"/>
        <dbReference type="EC" id="3.5.4.34"/>
    </reaction>
</comment>
<comment type="cofactor">
    <cofactor evidence="1">
        <name>1D-myo-inositol hexakisphosphate</name>
        <dbReference type="ChEBI" id="CHEBI:58130"/>
    </cofactor>
    <text evidence="1">Binds 1 myo-inositol hexakisphosphate (IP6) per subunit.</text>
</comment>
<comment type="similarity">
    <text evidence="3">Belongs to the ADAT1 family.</text>
</comment>
<sequence>MWTADEIAELCYEHYRSRLPKQGKPDPSREWTSLAAVVKVESAANEAGSAVLGTLQVAKEVVALGTGTKCIGLNKMRKTGDVLNDSHAEVVAKRSFQRYLLHQMRLATSYQQCSIFIPGTETGKWKLKPNIIFIFFCSHTPCGDASIIPIRETENHLSKSVDGHDIAGQSVLCSSSNCDHRGPEDKRKSEKMASSHMIKRMKNADGGFFSTITEDMAVQQVFAKPEGNVNPECCESSEEMQAANKETNAGKLKAVGVYRTGAKFVPGELSDTLIPGIEYHCVGLLRVKPGRGDRTCSMSCSDKLARWNVLGCQGALLMHFLQYPVYLSAVIVGKCPYSQEAMQRAVIERCRHISLLPDGFLTQEVQLLQSDLQFEHSRQAIQEGQTSSKRKLVPCSAAISWSAVPEGPLDVTSDGFRQGTTKKGIGSPQSRSKICKVELFHEFQKLVTSISKENLPDTLRMKTLETYWDYKEAALNYQEAWKALRSQALLGWIKNAQEYLLFM</sequence>
<reference key="1">
    <citation type="journal article" date="2005" name="Genome Biol.">
        <title>Full-length cDNAs from chicken bursal lymphocytes to facilitate gene function analysis.</title>
        <authorList>
            <person name="Caldwell R.B."/>
            <person name="Kierzek A.M."/>
            <person name="Arakawa H."/>
            <person name="Bezzubov Y."/>
            <person name="Zaim J."/>
            <person name="Fiedler P."/>
            <person name="Kutter S."/>
            <person name="Blagodatski A."/>
            <person name="Kostovska D."/>
            <person name="Koter M."/>
            <person name="Plachy J."/>
            <person name="Carninci P."/>
            <person name="Hayashizaki Y."/>
            <person name="Buerstedde J.-M."/>
        </authorList>
    </citation>
    <scope>NUCLEOTIDE SEQUENCE [LARGE SCALE MRNA]</scope>
    <source>
        <strain>CB</strain>
        <tissue>Bursa of Fabricius</tissue>
    </source>
</reference>